<keyword id="KW-0002">3D-structure</keyword>
<keyword id="KW-0903">Direct protein sequencing</keyword>
<keyword id="KW-0301">Gamma-carboxyglutamic acid</keyword>
<keyword id="KW-0325">Glycoprotein</keyword>
<keyword id="KW-0372">Hormone</keyword>
<keyword id="KW-0597">Phosphoprotein</keyword>
<keyword id="KW-1185">Reference proteome</keyword>
<keyword id="KW-0964">Secreted</keyword>
<keyword id="KW-0732">Signal</keyword>
<keyword id="KW-0765">Sulfation</keyword>
<keyword id="KW-0795">Thyroid hormone</keyword>
<keyword id="KW-0813">Transport</keyword>
<reference key="1">
    <citation type="journal article" date="1985" name="J. Biol. Chem.">
        <title>The primary structure of rabbit and rat prealbumin and a comparison with the tertiary structure of human prealbumin.</title>
        <authorList>
            <person name="Sundelin J."/>
            <person name="Melhus H."/>
            <person name="Das S."/>
            <person name="Eriksson U."/>
            <person name="Lind P."/>
            <person name="Traegaardh L."/>
            <person name="Peterson P.A."/>
            <person name="Rask L."/>
        </authorList>
    </citation>
    <scope>NUCLEOTIDE SEQUENCE [MRNA]</scope>
</reference>
<reference key="2">
    <citation type="journal article" date="1985" name="J. Biol. Chem.">
        <title>Rat transthyretin (prealbumin). Molecular cloning, nucleotide sequence, and gene expression in liver and brain.</title>
        <authorList>
            <person name="Dickson P.W."/>
            <person name="Howlett G.J."/>
            <person name="Schreiber G."/>
        </authorList>
    </citation>
    <scope>NUCLEOTIDE SEQUENCE [GENOMIC DNA]</scope>
</reference>
<reference key="3">
    <citation type="journal article" date="1989" name="Nucleic Acids Res.">
        <title>Cloning and nucleotide sequencing of transthyretin (prealbumin) cDNA from rat choroid plexus and liver.</title>
        <authorList>
            <person name="Duan W."/>
            <person name="Cole T."/>
            <person name="Schreiber G."/>
        </authorList>
    </citation>
    <scope>NUCLEOTIDE SEQUENCE [MRNA]</scope>
    <scope>TISSUE SPECIFICITY</scope>
</reference>
<reference key="4">
    <citation type="submission" date="2002-01" db="EMBL/GenBank/DDBJ databases">
        <title>Cloning and identification of differential display genes after short interval successive partial hepatectomy in rat liver regeneration.</title>
        <authorList>
            <person name="Lee Y."/>
            <person name="Xu C."/>
            <person name="Zhang Y."/>
        </authorList>
    </citation>
    <scope>NUCLEOTIDE SEQUENCE [MRNA]</scope>
    <source>
        <strain>Sprague-Dawley</strain>
    </source>
</reference>
<reference key="5">
    <citation type="journal article" date="2004" name="Genome Res.">
        <title>The status, quality, and expansion of the NIH full-length cDNA project: the Mammalian Gene Collection (MGC).</title>
        <authorList>
            <consortium name="The MGC Project Team"/>
        </authorList>
    </citation>
    <scope>NUCLEOTIDE SEQUENCE [LARGE SCALE MRNA]</scope>
    <source>
        <tissue>Liver</tissue>
    </source>
</reference>
<reference key="6">
    <citation type="journal article" date="1988" name="J. Biol. Chem.">
        <title>Structure and expression of the rat transthyretin (prealbumin) gene.</title>
        <authorList>
            <person name="Fung W.-P."/>
            <person name="Thomas T."/>
            <person name="Dickson P.W."/>
            <person name="Aldred A.R."/>
            <person name="Milland J."/>
            <person name="Dziadek M."/>
            <person name="Power B."/>
            <person name="Hudson P.J."/>
            <person name="Schreiber G."/>
        </authorList>
    </citation>
    <scope>NUCLEOTIDE SEQUENCE [GENOMIC DNA] OF 1-23 AND 113-147</scope>
    <source>
        <strain>Buffalo</strain>
        <tissue>Liver</tissue>
    </source>
</reference>
<reference key="7">
    <citation type="journal article" date="1977" name="J. Biol. Chem.">
        <title>Rat plasma prealbumin. Isolation and partial characterization.</title>
        <authorList>
            <person name="Navab M."/>
            <person name="Mallia A.K."/>
            <person name="Kanda Y."/>
            <person name="Goodman D.S."/>
        </authorList>
    </citation>
    <scope>PROTEIN SEQUENCE OF 21-35 AND 38-50</scope>
    <scope>SUBUNIT</scope>
    <scope>INTERACTION WITH RBP4</scope>
    <scope>SUBCELLULAR LOCATION</scope>
    <scope>TISSUE SPECIFICITY</scope>
    <source>
        <tissue>Serum</tissue>
    </source>
</reference>
<reference key="8">
    <citation type="submission" date="2007-09" db="UniProtKB">
        <authorList>
            <person name="Lubec G."/>
            <person name="Afjehi-Sadat L."/>
            <person name="Lubec S."/>
        </authorList>
    </citation>
    <scope>PROTEIN SEQUENCE OF 56-90; 101-123 AND 124-147</scope>
    <scope>IDENTIFICATION BY MASS SPECTROMETRY</scope>
    <source>
        <strain>Sprague-Dawley</strain>
        <tissue>Brain</tissue>
        <tissue>Spinal cord</tissue>
    </source>
</reference>
<reference key="9">
    <citation type="journal article" date="1990" name="Am. J. Physiol.">
        <title>Thyroxine transport from blood to brain via transthyretin synthesis in choroid plexus.</title>
        <authorList>
            <person name="Schreiber G."/>
            <person name="Aldred A.R."/>
            <person name="Jaworowski A."/>
            <person name="Nilsson C."/>
            <person name="Achen M.G."/>
            <person name="Segal M.B."/>
        </authorList>
    </citation>
    <scope>FUNCTION</scope>
    <scope>SUBCELLULAR LOCATION</scope>
    <scope>TISSUE SPECIFICITY</scope>
</reference>
<reference key="10">
    <citation type="journal article" date="2012" name="Nat. Commun.">
        <title>Quantitative maps of protein phosphorylation sites across 14 different rat organs and tissues.</title>
        <authorList>
            <person name="Lundby A."/>
            <person name="Secher A."/>
            <person name="Lage K."/>
            <person name="Nordsborg N.B."/>
            <person name="Dmytriyev A."/>
            <person name="Lundby C."/>
            <person name="Olsen J.V."/>
        </authorList>
    </citation>
    <scope>PHOSPHORYLATION [LARGE SCALE ANALYSIS] AT SER-72</scope>
    <scope>IDENTIFICATION BY MASS SPECTROMETRY [LARGE SCALE ANALYSIS]</scope>
</reference>
<reference key="11">
    <citation type="journal article" date="1997" name="Acta Biochim. Pol.">
        <title>Crystal structure of rat transthyretin at 2.5-A resolution: first report on a unique tetrameric structure.</title>
        <authorList>
            <person name="Wojtczak A."/>
        </authorList>
    </citation>
    <scope>X-RAY CRYSTALLOGRAPHY (2.5 ANGSTROMS)</scope>
    <scope>SUBUNIT</scope>
</reference>
<reference evidence="11" key="12">
    <citation type="journal article" date="2001" name="Acta Biochim. Pol.">
        <title>Complex of rat transthyretin with tetraiodothyroacetic acid refined at 2.1 and 1.8 A resolution.</title>
        <authorList>
            <person name="Muziol T."/>
            <person name="Cody V."/>
            <person name="Luft J.R."/>
            <person name="Pangborn W."/>
            <person name="Wojtczak A."/>
        </authorList>
    </citation>
    <scope>X-RAY CRYSTALLOGRAPHY (1.8 ANGSTROMS) OF 21-147 IN COMPLEX WITH TETRAIODOTHYROACETIC ACID</scope>
    <scope>INTERACTION WITH RETINOL-BINDING PROTEIN</scope>
    <scope>SUBUNIT</scope>
</reference>
<reference key="13">
    <citation type="journal article" date="2004" name="Proc. Natl. Acad. Sci. U.S.A.">
        <title>High-resolution molecular structure of a peptide in an amyloid fibril determined by magic angle spinning NMR spectroscopy.</title>
        <authorList>
            <person name="Jaroniec C.P."/>
            <person name="MacPhee C.E."/>
            <person name="Bajaj V.S."/>
            <person name="McMahon M.T."/>
            <person name="Dobson C.M."/>
            <person name="Griffin R.G."/>
        </authorList>
    </citation>
    <scope>STRUCTURE BY NMR OF 125-135 OF FIBRILLAR FORM</scope>
</reference>
<gene>
    <name type="primary">Ttr</name>
    <name type="synonym">Tt</name>
</gene>
<proteinExistence type="evidence at protein level"/>
<feature type="signal peptide" evidence="7">
    <location>
        <begin position="1"/>
        <end position="20"/>
    </location>
</feature>
<feature type="chain" id="PRO_0000035764" description="Transthyretin">
    <location>
        <begin position="21"/>
        <end position="147"/>
    </location>
</feature>
<feature type="binding site" evidence="10 11">
    <location>
        <position position="35"/>
    </location>
    <ligand>
        <name>L-thyroxine</name>
        <dbReference type="ChEBI" id="CHEBI:58448"/>
    </ligand>
</feature>
<feature type="binding site" evidence="10">
    <location>
        <position position="74"/>
    </location>
    <ligand>
        <name>L-thyroxine</name>
        <dbReference type="ChEBI" id="CHEBI:58448"/>
    </ligand>
</feature>
<feature type="binding site" evidence="10 11">
    <location>
        <position position="137"/>
    </location>
    <ligand>
        <name>L-thyroxine</name>
        <dbReference type="ChEBI" id="CHEBI:58448"/>
    </ligand>
</feature>
<feature type="modified residue" description="Sulfocysteine" evidence="2">
    <location>
        <position position="30"/>
    </location>
</feature>
<feature type="modified residue" description="4-carboxyglutamate" evidence="2">
    <location>
        <position position="62"/>
    </location>
</feature>
<feature type="modified residue" description="Phosphoserine" evidence="12">
    <location>
        <position position="72"/>
    </location>
</feature>
<feature type="glycosylation site" description="N-linked (GlcNAc...) asparagine" evidence="3">
    <location>
        <position position="118"/>
    </location>
</feature>
<feature type="sequence conflict" description="In Ref. 1; AAA41801." evidence="9" ref="1">
    <original>K</original>
    <variation>R</variation>
    <location>
        <position position="55"/>
    </location>
</feature>
<feature type="strand" evidence="13">
    <location>
        <begin position="31"/>
        <end position="38"/>
    </location>
</feature>
<feature type="turn" evidence="13">
    <location>
        <begin position="39"/>
        <end position="42"/>
    </location>
</feature>
<feature type="strand" evidence="13">
    <location>
        <begin position="49"/>
        <end position="55"/>
    </location>
</feature>
<feature type="strand" evidence="13">
    <location>
        <begin position="61"/>
        <end position="68"/>
    </location>
</feature>
<feature type="strand" evidence="13">
    <location>
        <begin position="73"/>
        <end position="75"/>
    </location>
</feature>
<feature type="turn" evidence="13">
    <location>
        <begin position="81"/>
        <end position="83"/>
    </location>
</feature>
<feature type="strand" evidence="13">
    <location>
        <begin position="86"/>
        <end position="93"/>
    </location>
</feature>
<feature type="helix" evidence="13">
    <location>
        <begin position="95"/>
        <end position="101"/>
    </location>
</feature>
<feature type="strand" evidence="13">
    <location>
        <begin position="107"/>
        <end position="118"/>
    </location>
</feature>
<feature type="strand" evidence="13">
    <location>
        <begin position="124"/>
        <end position="132"/>
    </location>
</feature>
<feature type="strand" evidence="13">
    <location>
        <begin position="135"/>
        <end position="143"/>
    </location>
</feature>
<organism>
    <name type="scientific">Rattus norvegicus</name>
    <name type="common">Rat</name>
    <dbReference type="NCBI Taxonomy" id="10116"/>
    <lineage>
        <taxon>Eukaryota</taxon>
        <taxon>Metazoa</taxon>
        <taxon>Chordata</taxon>
        <taxon>Craniata</taxon>
        <taxon>Vertebrata</taxon>
        <taxon>Euteleostomi</taxon>
        <taxon>Mammalia</taxon>
        <taxon>Eutheria</taxon>
        <taxon>Euarchontoglires</taxon>
        <taxon>Glires</taxon>
        <taxon>Rodentia</taxon>
        <taxon>Myomorpha</taxon>
        <taxon>Muroidea</taxon>
        <taxon>Muridae</taxon>
        <taxon>Murinae</taxon>
        <taxon>Rattus</taxon>
    </lineage>
</organism>
<evidence type="ECO:0000250" key="1"/>
<evidence type="ECO:0000250" key="2">
    <source>
        <dbReference type="UniProtKB" id="P02766"/>
    </source>
</evidence>
<evidence type="ECO:0000255" key="3"/>
<evidence type="ECO:0000269" key="4">
    <source>
    </source>
</evidence>
<evidence type="ECO:0000269" key="5">
    <source>
    </source>
</evidence>
<evidence type="ECO:0000269" key="6">
    <source>
    </source>
</evidence>
<evidence type="ECO:0000269" key="7">
    <source>
    </source>
</evidence>
<evidence type="ECO:0000269" key="8">
    <source>
    </source>
</evidence>
<evidence type="ECO:0000305" key="9"/>
<evidence type="ECO:0000305" key="10">
    <source>
    </source>
</evidence>
<evidence type="ECO:0007744" key="11">
    <source>
        <dbReference type="PDB" id="1KGI"/>
    </source>
</evidence>
<evidence type="ECO:0007744" key="12">
    <source>
    </source>
</evidence>
<evidence type="ECO:0007829" key="13">
    <source>
        <dbReference type="PDB" id="1KGI"/>
    </source>
</evidence>
<comment type="function">
    <text evidence="5">Thyroid hormone-binding protein. Probably transports thyroxine from the bloodstream to the brain.</text>
</comment>
<comment type="subunit">
    <text evidence="4 7 8">Homotetramer. Dimer of dimers. In the homotetramer, subunits assemble around a central channel that can accommodate two ligand molecules. Interacts with RBP4.</text>
</comment>
<comment type="subcellular location">
    <subcellularLocation>
        <location evidence="5 7">Secreted</location>
    </subcellularLocation>
</comment>
<comment type="tissue specificity">
    <text evidence="5 6 7">Detected in serum and cerebrospinal fluid (at protein level). Highly expressed in the choroid plexus. Detected at lower levels in the liver.</text>
</comment>
<comment type="PTM">
    <text evidence="2">Sulfonation of the reactive cysteine Cys-30 enhances the stability of the native conformation of TTR, avoiding misassembly of the protein leading to amyloid formation.</text>
</comment>
<comment type="miscellaneous">
    <text>This protein binds retinol-binding protein at levels similar to, and the thyroid hormones at levels much higher than, the human protein.</text>
</comment>
<comment type="miscellaneous">
    <text evidence="1">Tetramer dissociation and partial unfolding leads to the formation of aggregates and amyloid fibrils. Small molecules that occupy at least one of the thyroid hormone binding sites stabilize the tetramer, and thereby stabilize the native state and protect against misfolding and the formation of amyloid fibrils (By similarity).</text>
</comment>
<comment type="similarity">
    <text evidence="9">Belongs to the transthyretin family.</text>
</comment>
<dbReference type="EMBL" id="K03252">
    <property type="protein sequence ID" value="AAA41801.1"/>
    <property type="molecule type" value="mRNA"/>
</dbReference>
<dbReference type="EMBL" id="K03251">
    <property type="protein sequence ID" value="AAA41802.1"/>
    <property type="molecule type" value="Genomic_DNA"/>
</dbReference>
<dbReference type="EMBL" id="X14876">
    <property type="protein sequence ID" value="CAA33017.1"/>
    <property type="molecule type" value="mRNA"/>
</dbReference>
<dbReference type="EMBL" id="AF479660">
    <property type="protein sequence ID" value="AAL78377.1"/>
    <property type="molecule type" value="mRNA"/>
</dbReference>
<dbReference type="EMBL" id="BC086946">
    <property type="protein sequence ID" value="AAH86946.1"/>
    <property type="molecule type" value="mRNA"/>
</dbReference>
<dbReference type="EMBL" id="M18685">
    <property type="protein sequence ID" value="AAA40708.1"/>
    <property type="molecule type" value="Genomic_DNA"/>
</dbReference>
<dbReference type="EMBL" id="M20246">
    <property type="protein sequence ID" value="AAA40709.1"/>
    <property type="molecule type" value="Genomic_DNA"/>
</dbReference>
<dbReference type="PIR" id="A92542">
    <property type="entry name" value="VBRT"/>
</dbReference>
<dbReference type="RefSeq" id="NP_036813.2">
    <property type="nucleotide sequence ID" value="NM_012681.2"/>
</dbReference>
<dbReference type="RefSeq" id="XP_006254519.1">
    <property type="nucleotide sequence ID" value="XM_006254457.2"/>
</dbReference>
<dbReference type="PDB" id="1GKE">
    <property type="method" value="X-ray"/>
    <property type="resolution" value="2.50 A"/>
    <property type="chains" value="A/B/C/D=28-147"/>
</dbReference>
<dbReference type="PDB" id="1IE4">
    <property type="method" value="X-ray"/>
    <property type="resolution" value="2.50 A"/>
    <property type="chains" value="A/B/C/D=21-147"/>
</dbReference>
<dbReference type="PDB" id="1KGI">
    <property type="method" value="X-ray"/>
    <property type="resolution" value="1.80 A"/>
    <property type="chains" value="A/B/C/D=21-147"/>
</dbReference>
<dbReference type="PDB" id="1KGJ">
    <property type="method" value="X-ray"/>
    <property type="resolution" value="2.30 A"/>
    <property type="chains" value="A/B/C/D=21-147"/>
</dbReference>
<dbReference type="PDB" id="1RVS">
    <property type="method" value="NMR"/>
    <property type="chains" value="A=125-135"/>
</dbReference>
<dbReference type="PDB" id="2M5K">
    <property type="method" value="EM"/>
    <property type="resolution" value="12.70 A"/>
    <property type="chains" value="A/B/C/D/E/F/G/H=125-135"/>
</dbReference>
<dbReference type="PDB" id="2M5M">
    <property type="method" value="EM"/>
    <property type="resolution" value="12.20 A"/>
    <property type="chains" value="A/B/C/D/E/F/G/H/I/J/K/L=125-135"/>
</dbReference>
<dbReference type="PDB" id="3ZPK">
    <property type="method" value="NMR"/>
    <property type="chains" value="A/B/C/D/E/F/G/H/I/J/K/L/M/N/O/P=125-135"/>
</dbReference>
<dbReference type="PDBsum" id="1GKE"/>
<dbReference type="PDBsum" id="1IE4"/>
<dbReference type="PDBsum" id="1KGI"/>
<dbReference type="PDBsum" id="1KGJ"/>
<dbReference type="PDBsum" id="1RVS"/>
<dbReference type="PDBsum" id="2M5K"/>
<dbReference type="PDBsum" id="2M5M"/>
<dbReference type="PDBsum" id="3ZPK"/>
<dbReference type="EMDB" id="EMD-2323"/>
<dbReference type="EMDB" id="EMD-2324"/>
<dbReference type="SMR" id="P02767"/>
<dbReference type="BioGRID" id="246973">
    <property type="interactions" value="1"/>
</dbReference>
<dbReference type="FunCoup" id="P02767">
    <property type="interactions" value="73"/>
</dbReference>
<dbReference type="IntAct" id="P02767">
    <property type="interactions" value="2"/>
</dbReference>
<dbReference type="MINT" id="P02767"/>
<dbReference type="STRING" id="10116.ENSRNOP00000022113"/>
<dbReference type="ChEMBL" id="CHEMBL2151"/>
<dbReference type="TCDB" id="9.B.35.1.1">
    <property type="family name" value="the putative thyronine-transporting transthyretin (transthyretin) family"/>
</dbReference>
<dbReference type="GlyCosmos" id="P02767">
    <property type="glycosylation" value="1 site, No reported glycans"/>
</dbReference>
<dbReference type="GlyGen" id="P02767">
    <property type="glycosylation" value="1 site"/>
</dbReference>
<dbReference type="iPTMnet" id="P02767"/>
<dbReference type="PhosphoSitePlus" id="P02767"/>
<dbReference type="PaxDb" id="10116-ENSRNOP00000022113"/>
<dbReference type="GeneID" id="24856"/>
<dbReference type="KEGG" id="rno:24856"/>
<dbReference type="AGR" id="RGD:3916"/>
<dbReference type="CTD" id="7276"/>
<dbReference type="RGD" id="3916">
    <property type="gene designation" value="Ttr"/>
</dbReference>
<dbReference type="VEuPathDB" id="HostDB:ENSRNOG00000016275"/>
<dbReference type="eggNOG" id="KOG3006">
    <property type="taxonomic scope" value="Eukaryota"/>
</dbReference>
<dbReference type="HOGENOM" id="CLU_115536_2_0_1"/>
<dbReference type="InParanoid" id="P02767"/>
<dbReference type="OrthoDB" id="10265230at2759"/>
<dbReference type="PhylomeDB" id="P02767"/>
<dbReference type="TreeFam" id="TF300210"/>
<dbReference type="Reactome" id="R-RNO-2453902">
    <property type="pathway name" value="The canonical retinoid cycle in rods (twilight vision)"/>
</dbReference>
<dbReference type="Reactome" id="R-RNO-6798695">
    <property type="pathway name" value="Neutrophil degranulation"/>
</dbReference>
<dbReference type="Reactome" id="R-RNO-975634">
    <property type="pathway name" value="Retinoid metabolism and transport"/>
</dbReference>
<dbReference type="EvolutionaryTrace" id="P02767"/>
<dbReference type="PRO" id="PR:P02767"/>
<dbReference type="Proteomes" id="UP000002494">
    <property type="component" value="Chromosome 18"/>
</dbReference>
<dbReference type="Bgee" id="ENSRNOG00000016275">
    <property type="expression patterns" value="Expressed in liver and 19 other cell types or tissues"/>
</dbReference>
<dbReference type="GO" id="GO:0005576">
    <property type="term" value="C:extracellular region"/>
    <property type="evidence" value="ECO:0000266"/>
    <property type="project" value="RGD"/>
</dbReference>
<dbReference type="GO" id="GO:0005615">
    <property type="term" value="C:extracellular space"/>
    <property type="evidence" value="ECO:0000314"/>
    <property type="project" value="RGD"/>
</dbReference>
<dbReference type="GO" id="GO:0032991">
    <property type="term" value="C:protein-containing complex"/>
    <property type="evidence" value="ECO:0000314"/>
    <property type="project" value="RGD"/>
</dbReference>
<dbReference type="GO" id="GO:0005179">
    <property type="term" value="F:hormone activity"/>
    <property type="evidence" value="ECO:0007669"/>
    <property type="project" value="UniProtKB-KW"/>
</dbReference>
<dbReference type="GO" id="GO:0042562">
    <property type="term" value="F:hormone binding"/>
    <property type="evidence" value="ECO:0000314"/>
    <property type="project" value="RGD"/>
</dbReference>
<dbReference type="GO" id="GO:0042802">
    <property type="term" value="F:identical protein binding"/>
    <property type="evidence" value="ECO:0000266"/>
    <property type="project" value="RGD"/>
</dbReference>
<dbReference type="GO" id="GO:0140313">
    <property type="term" value="F:molecular sequestering activity"/>
    <property type="evidence" value="ECO:0000266"/>
    <property type="project" value="RGD"/>
</dbReference>
<dbReference type="GO" id="GO:0044877">
    <property type="term" value="F:protein-containing complex binding"/>
    <property type="evidence" value="ECO:0000314"/>
    <property type="project" value="RGD"/>
</dbReference>
<dbReference type="GO" id="GO:0036094">
    <property type="term" value="F:small molecule binding"/>
    <property type="evidence" value="ECO:0000266"/>
    <property type="project" value="RGD"/>
</dbReference>
<dbReference type="GO" id="GO:0070324">
    <property type="term" value="F:thyroid hormone binding"/>
    <property type="evidence" value="ECO:0000266"/>
    <property type="project" value="RGD"/>
</dbReference>
<dbReference type="GO" id="GO:0003105">
    <property type="term" value="P:negative regulation of glomerular filtration"/>
    <property type="evidence" value="ECO:0000266"/>
    <property type="project" value="RGD"/>
</dbReference>
<dbReference type="GO" id="GO:0007603">
    <property type="term" value="P:phototransduction, visible light"/>
    <property type="evidence" value="ECO:0000266"/>
    <property type="project" value="RGD"/>
</dbReference>
<dbReference type="GO" id="GO:0006144">
    <property type="term" value="P:purine nucleobase metabolic process"/>
    <property type="evidence" value="ECO:0000318"/>
    <property type="project" value="GO_Central"/>
</dbReference>
<dbReference type="GO" id="GO:0001523">
    <property type="term" value="P:retinoid metabolic process"/>
    <property type="evidence" value="ECO:0000266"/>
    <property type="project" value="RGD"/>
</dbReference>
<dbReference type="GO" id="GO:0042403">
    <property type="term" value="P:thyroid hormone metabolic process"/>
    <property type="evidence" value="ECO:0000304"/>
    <property type="project" value="RGD"/>
</dbReference>
<dbReference type="CDD" id="cd05821">
    <property type="entry name" value="TLP_Transthyretin"/>
    <property type="match status" value="1"/>
</dbReference>
<dbReference type="FunFam" id="2.60.40.180:FF:000002">
    <property type="entry name" value="Transthyretin"/>
    <property type="match status" value="1"/>
</dbReference>
<dbReference type="Gene3D" id="2.60.40.180">
    <property type="entry name" value="Transthyretin/hydroxyisourate hydrolase domain"/>
    <property type="match status" value="1"/>
</dbReference>
<dbReference type="InterPro" id="IPR023418">
    <property type="entry name" value="Thyroxine_BS"/>
</dbReference>
<dbReference type="InterPro" id="IPR000895">
    <property type="entry name" value="Transthyretin/HIU_hydrolase"/>
</dbReference>
<dbReference type="InterPro" id="IPR023416">
    <property type="entry name" value="Transthyretin/HIU_hydrolase_d"/>
</dbReference>
<dbReference type="InterPro" id="IPR036817">
    <property type="entry name" value="Transthyretin/HIU_hydrolase_sf"/>
</dbReference>
<dbReference type="InterPro" id="IPR023419">
    <property type="entry name" value="Transthyretin_CS"/>
</dbReference>
<dbReference type="PANTHER" id="PTHR10395:SF12">
    <property type="entry name" value="TRANSTHYRETIN"/>
    <property type="match status" value="1"/>
</dbReference>
<dbReference type="PANTHER" id="PTHR10395">
    <property type="entry name" value="URICASE AND TRANSTHYRETIN-RELATED"/>
    <property type="match status" value="1"/>
</dbReference>
<dbReference type="Pfam" id="PF00576">
    <property type="entry name" value="Transthyretin"/>
    <property type="match status" value="1"/>
</dbReference>
<dbReference type="PRINTS" id="PR00189">
    <property type="entry name" value="TRNSTHYRETIN"/>
</dbReference>
<dbReference type="SMART" id="SM00095">
    <property type="entry name" value="TR_THY"/>
    <property type="match status" value="1"/>
</dbReference>
<dbReference type="SUPFAM" id="SSF49472">
    <property type="entry name" value="Transthyretin (synonym: prealbumin)"/>
    <property type="match status" value="1"/>
</dbReference>
<dbReference type="PROSITE" id="PS00768">
    <property type="entry name" value="TRANSTHYRETIN_1"/>
    <property type="match status" value="1"/>
</dbReference>
<dbReference type="PROSITE" id="PS00769">
    <property type="entry name" value="TRANSTHYRETIN_2"/>
    <property type="match status" value="1"/>
</dbReference>
<accession>P02767</accession>
<accession>Q547K9</accession>
<name>TTHY_RAT</name>
<sequence>MASLRLFLLCLAGLIFASEAGPGGAGESKCPLMVKVLDAVRGSPAVDVAVKVFKKTADGSWEPFASGKTAESGELHGLTTDEKFTEGVYRVELDTKSYWKALGISPFHEYAEVVFTANDSGHRHYTIAALLSPYSYSTTAVVSNPQN</sequence>
<protein>
    <recommendedName>
        <fullName>Transthyretin</fullName>
    </recommendedName>
    <alternativeName>
        <fullName>Prealbumin</fullName>
    </alternativeName>
    <alternativeName>
        <fullName>TBPA</fullName>
    </alternativeName>
</protein>